<proteinExistence type="inferred from homology"/>
<dbReference type="EC" id="3.1.-.-" evidence="5"/>
<dbReference type="EMBL" id="AB689163">
    <property type="protein sequence ID" value="BAM24402.1"/>
    <property type="molecule type" value="Viral_cRNA"/>
</dbReference>
<dbReference type="SMR" id="I7GVL4"/>
<dbReference type="GO" id="GO:0044177">
    <property type="term" value="C:host cell Golgi apparatus"/>
    <property type="evidence" value="ECO:0007669"/>
    <property type="project" value="UniProtKB-SubCell"/>
</dbReference>
<dbReference type="GO" id="GO:0044220">
    <property type="term" value="C:host cell perinuclear region of cytoplasm"/>
    <property type="evidence" value="ECO:0007669"/>
    <property type="project" value="UniProtKB-SubCell"/>
</dbReference>
<dbReference type="GO" id="GO:1990904">
    <property type="term" value="C:ribonucleoprotein complex"/>
    <property type="evidence" value="ECO:0007669"/>
    <property type="project" value="UniProtKB-KW"/>
</dbReference>
<dbReference type="GO" id="GO:0019013">
    <property type="term" value="C:viral nucleocapsid"/>
    <property type="evidence" value="ECO:0007669"/>
    <property type="project" value="UniProtKB-KW"/>
</dbReference>
<dbReference type="GO" id="GO:0004519">
    <property type="term" value="F:endonuclease activity"/>
    <property type="evidence" value="ECO:0007669"/>
    <property type="project" value="UniProtKB-KW"/>
</dbReference>
<dbReference type="GO" id="GO:0003723">
    <property type="term" value="F:RNA binding"/>
    <property type="evidence" value="ECO:0007669"/>
    <property type="project" value="UniProtKB-KW"/>
</dbReference>
<dbReference type="Gene3D" id="1.20.58.90">
    <property type="match status" value="1"/>
</dbReference>
<dbReference type="InterPro" id="IPR002214">
    <property type="entry name" value="Hanta_nucleocap"/>
</dbReference>
<dbReference type="Pfam" id="PF00846">
    <property type="entry name" value="Hanta_nucleocap"/>
    <property type="match status" value="1"/>
</dbReference>
<dbReference type="PIRSF" id="PIRSF003949">
    <property type="entry name" value="N_HantaV"/>
    <property type="match status" value="1"/>
</dbReference>
<name>NCAP_BCCV</name>
<evidence type="ECO:0000250" key="1">
    <source>
        <dbReference type="UniProtKB" id="O36307"/>
    </source>
</evidence>
<evidence type="ECO:0000250" key="2">
    <source>
        <dbReference type="UniProtKB" id="P05133"/>
    </source>
</evidence>
<evidence type="ECO:0000250" key="3">
    <source>
        <dbReference type="UniProtKB" id="P27313"/>
    </source>
</evidence>
<evidence type="ECO:0000250" key="4">
    <source>
        <dbReference type="UniProtKB" id="Q88918"/>
    </source>
</evidence>
<evidence type="ECO:0000250" key="5">
    <source>
        <dbReference type="UniProtKB" id="Q89462"/>
    </source>
</evidence>
<evidence type="ECO:0000255" key="6"/>
<evidence type="ECO:0000269" key="7">
    <source>
    </source>
</evidence>
<evidence type="ECO:0000305" key="8"/>
<evidence type="ECO:0000305" key="9">
    <source>
    </source>
</evidence>
<sequence length="428" mass="47804">MSNLKEVQDNITTHEQQLVAARQKLKDAERTVGVDPDDVNKSTLQNRRAAVSALEAKIGELKRQLADLVAAQKLATKSVDPTGIEPDDHLKEKSSLRYGNVLDVNSIDLEEPSGQTADWKAIGTYILSFVLPIVLKALYMLSTRGRQTVKENKGTRIRFKDDSSYEDVNGIRKPKHLYVSLPTAQSTMKADEITPGRFRTIVCGLFPAQIKARNIISPVMGVIGFSFFVKDWVDKIEDFLRAECPFLPKPRAQAESFLSTNGAYFMNRQTQVEESKVQDILDLIDTAESGGATLFDNIASPQSAWIFACAPDRCPPTALYVAGVPELGAFFSILQDMRNTIMASKSVGTAEEKLKKKSAFYQSYLRRTQSMGIQLDQKIIILYMINWGKEAVNHFHLGDDMDPELRQLAQALVDTKVKEISNQEPLKI</sequence>
<organismHost>
    <name type="scientific">Homo sapiens</name>
    <name type="common">Human</name>
    <dbReference type="NCBI Taxonomy" id="9606"/>
</organismHost>
<organismHost>
    <name type="scientific">Sigmodon hispidus</name>
    <name type="common">Hispid cotton rat</name>
    <dbReference type="NCBI Taxonomy" id="42415"/>
</organismHost>
<keyword id="KW-0143">Chaperone</keyword>
<keyword id="KW-0175">Coiled coil</keyword>
<keyword id="KW-0255">Endonuclease</keyword>
<keyword id="KW-1035">Host cytoplasm</keyword>
<keyword id="KW-1040">Host Golgi apparatus</keyword>
<keyword id="KW-0378">Hydrolase</keyword>
<keyword id="KW-0540">Nuclease</keyword>
<keyword id="KW-0687">Ribonucleoprotein</keyword>
<keyword id="KW-0694">RNA-binding</keyword>
<keyword id="KW-0543">Viral nucleoprotein</keyword>
<keyword id="KW-0946">Virion</keyword>
<protein>
    <recommendedName>
        <fullName>Nucleoprotein</fullName>
        <ecNumber evidence="5">3.1.-.-</ecNumber>
    </recommendedName>
    <alternativeName>
        <fullName>Nucleocapsid protein</fullName>
        <shortName>Protein N</shortName>
    </alternativeName>
</protein>
<gene>
    <name type="primary">N</name>
</gene>
<feature type="chain" id="PRO_0000455185" description="Nucleoprotein">
    <location>
        <begin position="1"/>
        <end position="428"/>
    </location>
</feature>
<feature type="region of interest" description="Viral panhandle binding" evidence="5">
    <location>
        <begin position="1"/>
        <end position="175"/>
    </location>
</feature>
<feature type="region of interest" description="Chaperone activity" evidence="5">
    <location>
        <begin position="1"/>
        <end position="100"/>
    </location>
</feature>
<feature type="region of interest" description="Homomultimerization" evidence="4">
    <location>
        <begin position="1"/>
        <end position="79"/>
    </location>
</feature>
<feature type="region of interest" description="RdRP binding" evidence="5">
    <location>
        <begin position="1"/>
        <end position="50"/>
    </location>
</feature>
<feature type="region of interest" description="Interaction with glycoprotein N" evidence="4">
    <location>
        <begin position="80"/>
        <end position="248"/>
    </location>
</feature>
<feature type="region of interest" description="Homomultimerization" evidence="2">
    <location>
        <begin position="100"/>
        <end position="125"/>
    </location>
</feature>
<feature type="region of interest" description="Interaction with host RPS19" evidence="5">
    <location>
        <begin position="150"/>
        <end position="175"/>
    </location>
</feature>
<feature type="region of interest" description="Viral RNA-binding" evidence="2">
    <location>
        <begin position="175"/>
        <end position="217"/>
    </location>
</feature>
<feature type="region of interest" description="Interaction with host UBE2I/UBC9" evidence="2">
    <location>
        <begin position="188"/>
        <end position="191"/>
    </location>
</feature>
<feature type="region of interest" description="Interaction with host DAXX" evidence="3">
    <location>
        <begin position="372"/>
        <end position="428"/>
    </location>
</feature>
<feature type="region of interest" description="Homomultimerization" evidence="4">
    <location>
        <begin position="372"/>
        <end position="420"/>
    </location>
</feature>
<feature type="coiled-coil region" evidence="6">
    <location>
        <begin position="4"/>
        <end position="71"/>
    </location>
</feature>
<feature type="short sequence motif" description="YxxL" evidence="2">
    <location>
        <begin position="178"/>
        <end position="181"/>
    </location>
</feature>
<feature type="site" description="Important for the endonuclease activity" evidence="5">
    <location>
        <position position="88"/>
    </location>
</feature>
<feature type="site" description="Important for the endonuclease activity" evidence="5">
    <location>
        <position position="103"/>
    </location>
</feature>
<comment type="function">
    <text evidence="1 2 5 8">Encapsidates the genome protecting it from nucleases (Probable). The encapsidated genomic RNA is termed the nucleocapsid (NC) and serves as template for transcription and replication (Probable). The nucleocapsid has a left-handed helical structure (By similarity). As a trimer, specifically binds and acts as a chaperone to unwind the panhandle structure formed by the viral RNA (vRNA) termini (By similarity). Involved in the transcription and replication initiation of vRNA by mediating primer annealing (By similarity). Plays a role in cap snatching by sequestering capped RNAs in P bodies for use by the viral RdRp during transcription initiation (By similarity). Substitutes for the cellular cap-binding complex (eIF4F) to preferentially facilitate the translation of capped mRNAs (By similarity). Initiates the translation by specifically binding to the cap and 40S ribosomal subunit (By similarity). Prevents the viral glycoprotein N (Gn) from autophagy-dependent breakdown maybe by blocking autophagosome formation (By similarity). Inhibits host EIF2AK2/PKR dimerization to prevent PKR-induced translational shutdown in cells and thus the activation of the antiviral state (By similarity). Also displays sequence-unspecific DNA endonuclease activity (By similarity).</text>
</comment>
<comment type="subunit">
    <text evidence="2 3 4 5">Homotrimer (By similarity). Homomultimer (By similarity). Homomultimerizes and binds to viral genomic RNA to form the nucleocapsid (By similarity). Interacts with host MAP1LC3B; this interaction participates to the protection of Gn from virus-triggered autophagy (By similarity). Interacts with host SNAP29; this interaction participates to the protection of glycoprotein N from virus-triggered autophagy (By similarity). Interacts (via N-terminus) with host RPS19; this interaction probably mediates the loading of the 40S ribosomal subunit on viral capped mRNA during N-mediated translation initiation (By similarity). Interacts with the viral RdRp (By similarity). Interacts with host SUMO1 (via N-terminus) (By similarity). Interacts with host DAXX (By similarity). Interacts with the viral glycoprotein N (via C-terminus) (By similarity). Interacts with the viral glycoprotein C (via C-terminus) (By similarity).</text>
</comment>
<comment type="subcellular location">
    <subcellularLocation>
        <location evidence="2">Virion</location>
    </subcellularLocation>
    <subcellularLocation>
        <location evidence="7">Host cytoplasm</location>
        <location evidence="7">Host perinuclear region</location>
    </subcellularLocation>
    <subcellularLocation>
        <location evidence="9">Host Golgi apparatus</location>
        <location evidence="9">Host cis-Golgi network</location>
    </subcellularLocation>
    <text evidence="2">Internal protein of virus particle.</text>
</comment>
<comment type="domain">
    <text evidence="2 5">The N-terminus is required for chaperone activity and, in trimeric form, this region likely serves in high affinity vRNA panhandle recognition (By similarity). The N-terminus also contains a coiled coil region, which probably participates in but is insufficient to initiate N trimerization (By similarity). The YxxL motif is indispensable for the interaction with host MAP1LC3B (By similarity). The central region is involved in specific RNA-binding (By similarity). Has distinct cap- and RNA-binding sites so it can bind simultaneously both the vRNA and mRNA cap (By similarity).</text>
</comment>
<comment type="similarity">
    <text evidence="8">Belongs to the hantavirus nucleocapsid protein family.</text>
</comment>
<accession>I7GVL4</accession>
<organism>
    <name type="scientific">Black Creek Canal orthohantavirus</name>
    <name type="common">BCCV</name>
    <name type="synonym">Black Creek Canal virus</name>
    <dbReference type="NCBI Taxonomy" id="3052490"/>
    <lineage>
        <taxon>Viruses</taxon>
        <taxon>Riboviria</taxon>
        <taxon>Orthornavirae</taxon>
        <taxon>Negarnaviricota</taxon>
        <taxon>Polyploviricotina</taxon>
        <taxon>Ellioviricetes</taxon>
        <taxon>Bunyavirales</taxon>
        <taxon>Hantaviridae</taxon>
        <taxon>Mammantavirinae</taxon>
        <taxon>Orthohantavirus</taxon>
    </lineage>
</organism>
<reference key="1">
    <citation type="journal article" date="2012" name="J. Virol. Methods">
        <title>Development of a serotyping enzyme-linked immunosorbent assay system based on recombinant truncated hantavirus nucleocapsid proteins for New World hantavirus infection.</title>
        <authorList>
            <person name="Koma T."/>
            <person name="Yoshimatsu K."/>
            <person name="Taruishi M."/>
            <person name="Miyashita D."/>
            <person name="Endo R."/>
            <person name="Shimizu K."/>
            <person name="Yasuda S.P."/>
            <person name="Amada T."/>
            <person name="Seto T."/>
            <person name="Murata R."/>
            <person name="Yoshida H."/>
            <person name="Kariwa H."/>
            <person name="Takashima I."/>
            <person name="Arikawa J."/>
        </authorList>
    </citation>
    <scope>NUCLEOTIDE SEQUENCE [GENOMIC RNA]</scope>
</reference>
<reference key="2">
    <citation type="journal article" date="2001" name="J. Virol.">
        <title>Hantavirus nucleocapsid protein is expressed as a membrane-associated protein in the perinuclear region.</title>
        <authorList>
            <person name="Ravkov E.V."/>
            <person name="Compans R.W."/>
        </authorList>
    </citation>
    <scope>SUBCELLULAR LOCATION</scope>
</reference>